<accession>A0A0M2H929</accession>
<evidence type="ECO:0000250" key="1">
    <source>
        <dbReference type="UniProtKB" id="H0QPL8"/>
    </source>
</evidence>
<evidence type="ECO:0000269" key="2">
    <source>
    </source>
</evidence>
<evidence type="ECO:0000303" key="3">
    <source>
    </source>
</evidence>
<evidence type="ECO:0000305" key="4"/>
<evidence type="ECO:0000312" key="5">
    <source>
        <dbReference type="EMBL" id="KJL42926.1"/>
    </source>
</evidence>
<organism>
    <name type="scientific">Microbacterium trichothecenolyticum</name>
    <name type="common">Aureobacterium trichothecenolyticum</name>
    <dbReference type="NCBI Taxonomy" id="69370"/>
    <lineage>
        <taxon>Bacteria</taxon>
        <taxon>Bacillati</taxon>
        <taxon>Actinomycetota</taxon>
        <taxon>Actinomycetes</taxon>
        <taxon>Micrococcales</taxon>
        <taxon>Microbacteriaceae</taxon>
        <taxon>Microbacterium</taxon>
    </lineage>
</organism>
<reference key="1">
    <citation type="submission" date="2015-02" db="EMBL/GenBank/DDBJ databases">
        <title>Draft genome sequences of ten Microbacterium spp. with emphasis on heavy metal contaminated environments.</title>
        <authorList>
            <person name="Corretto E."/>
        </authorList>
    </citation>
    <scope>NUCLEOTIDE SEQUENCE [LARGE SCALE GENOMIC DNA]</scope>
    <source>
        <strain>ATCC 51475 / DSM 8608 / JCM 1358 / LMG 16696 / NBRC 15077 / NRRL B-24212 / 114-2</strain>
    </source>
</reference>
<reference key="2">
    <citation type="journal article" date="2021" name="Nat. Commun.">
        <title>C-Glycoside metabolism in the gut and in nature: Identification, characterization, structural analyses and distribution of C-C bond-cleaving enzymes.</title>
        <authorList>
            <person name="Mori T."/>
            <person name="Kumano T."/>
            <person name="He H."/>
            <person name="Watanabe S."/>
            <person name="Senda M."/>
            <person name="Moriya T."/>
            <person name="Adachi N."/>
            <person name="Hori S."/>
            <person name="Terashita Y."/>
            <person name="Kawasaki M."/>
            <person name="Hashimoto Y."/>
            <person name="Awakawa T."/>
            <person name="Senda T."/>
            <person name="Abe I."/>
            <person name="Kobayashi M."/>
        </authorList>
    </citation>
    <scope>FUNCTION</scope>
    <scope>CATALYTIC ACTIVITY</scope>
    <scope>BIOPHYSICOCHEMICAL PROPERTIES</scope>
    <scope>SUBUNIT</scope>
    <source>
        <strain>ATCC 51475 / DSM 8608 / JCM 1358 / LMG 16696 / NBRC 15077 / NRRL B-24212 / 114-2</strain>
    </source>
</reference>
<feature type="chain" id="PRO_0000461032" description="C-glycoside deglycosidase beta subunit">
    <location>
        <begin position="1"/>
        <end position="131"/>
    </location>
</feature>
<sequence length="131" mass="14564">MIPDRIIEQGTLRTDGPRAAVEVRLPWYRALPGSCIAGAELTIDGKTAPAESLRWEMNGAEFTFDELRTNIDEWWFPTDSAVLSGDLDIEADAEHEVTVGLTLYIPYIIISDTETLHIDEKNTKTMKAVAA</sequence>
<keyword id="KW-0119">Carbohydrate metabolism</keyword>
<keyword id="KW-0456">Lyase</keyword>
<keyword id="KW-1185">Reference proteome</keyword>
<dbReference type="EC" id="4.1.99.-" evidence="2"/>
<dbReference type="EMBL" id="JYJA01000033">
    <property type="protein sequence ID" value="KJL42926.1"/>
    <property type="molecule type" value="Genomic_DNA"/>
</dbReference>
<dbReference type="RefSeq" id="WP_045298609.1">
    <property type="nucleotide sequence ID" value="NZ_JYJA01000033.1"/>
</dbReference>
<dbReference type="SMR" id="A0A0M2H929"/>
<dbReference type="PATRIC" id="fig|69370.6.peg.1923"/>
<dbReference type="OrthoDB" id="1494151at2"/>
<dbReference type="Proteomes" id="UP000034098">
    <property type="component" value="Unassembled WGS sequence"/>
</dbReference>
<dbReference type="GO" id="GO:0016829">
    <property type="term" value="F:lyase activity"/>
    <property type="evidence" value="ECO:0007669"/>
    <property type="project" value="UniProtKB-KW"/>
</dbReference>
<dbReference type="InterPro" id="IPR045959">
    <property type="entry name" value="CGDB"/>
</dbReference>
<dbReference type="Pfam" id="PF19906">
    <property type="entry name" value="CGDB"/>
    <property type="match status" value="1"/>
</dbReference>
<gene>
    <name evidence="3" type="primary">carC</name>
    <name evidence="5" type="ORF">RS82_01891</name>
</gene>
<protein>
    <recommendedName>
        <fullName evidence="3">C-glycoside deglycosidase beta subunit</fullName>
        <shortName evidence="3">CGD beta subunit</shortName>
        <ecNumber evidence="2">4.1.99.-</ecNumber>
    </recommendedName>
    <alternativeName>
        <fullName evidence="3">C-deglycosylation enzyme beta subunit</fullName>
    </alternativeName>
    <alternativeName>
        <fullName evidence="3">MtCGD beta</fullName>
    </alternativeName>
</protein>
<comment type="function">
    <text evidence="2">Carbon-carbon bond-cleaving enzyme which participates in the metabolism of C-glycosides (PubMed:34728636). Acts on the C6-glycosylated compounds 3''-dehydroisovitexin (3''-oxo-isovitexin) and 3''-dehydroisoorientin (3''-oxo-homoorientin) (PubMed:34728636). Shows weak activity with 3'-dehydromangiferin (3'-oxo-mangiferin) (PubMed:34728636).</text>
</comment>
<comment type="catalytic activity">
    <reaction evidence="2">
        <text>3''-dehydroisovitexin = 1,5-anhydro-D-erythro-hex-1-en-3-ulose + apigenin</text>
        <dbReference type="Rhea" id="RHEA:78775"/>
        <dbReference type="ChEBI" id="CHEBI:58470"/>
        <dbReference type="ChEBI" id="CHEBI:194219"/>
        <dbReference type="ChEBI" id="CHEBI:195275"/>
    </reaction>
</comment>
<comment type="catalytic activity">
    <reaction evidence="2">
        <text>3''-dehydroisoorientin = 1,5-anhydro-D-erythro-hex-1-en-3-ulose + luteolin</text>
        <dbReference type="Rhea" id="RHEA:78771"/>
        <dbReference type="ChEBI" id="CHEBI:57545"/>
        <dbReference type="ChEBI" id="CHEBI:194218"/>
        <dbReference type="ChEBI" id="CHEBI:195275"/>
    </reaction>
</comment>
<comment type="cofactor">
    <cofactor evidence="1">
        <name>a divalent metal cation</name>
        <dbReference type="ChEBI" id="CHEBI:60240"/>
    </cofactor>
</comment>
<comment type="biophysicochemical properties">
    <kinetics>
        <KM evidence="2">8.2 mM for 3''-dehydroisovitexin</KM>
        <KM evidence="2">6.1 mM for 3'-dehydromangiferin</KM>
        <text evidence="2">kcat is 32 min(-1) with 3''-dehydroisovitexin as substrate. kcat is 21 min(-1) with 3''-dehydroisoorientin as substrate. kcat is 0.60 min(-1) with 3'-dehydromangiferin as substrate.</text>
    </kinetics>
    <phDependence>
        <text evidence="2">Optimum pH is 6.0.</text>
    </phDependence>
    <temperatureDependence>
        <text evidence="2">Optimum temperature is around 40 degrees Celsius.</text>
    </temperatureDependence>
</comment>
<comment type="subunit">
    <text evidence="2">Heterodimer composed of an alpha subunit (CarB) and a beta subunit (CarC).</text>
</comment>
<comment type="similarity">
    <text evidence="4">Belongs to the C-glycoside deglycosidase beta subunit family.</text>
</comment>
<name>CGDB_MICTR</name>
<proteinExistence type="evidence at protein level"/>